<accession>Q9WCE8</accession>
<dbReference type="EMBL" id="AF091317">
    <property type="protein sequence ID" value="AAD25312.1"/>
    <property type="molecule type" value="mRNA"/>
</dbReference>
<dbReference type="SMR" id="Q9WCE8"/>
<dbReference type="GlyCosmos" id="Q9WCE8">
    <property type="glycosylation" value="6 sites, No reported glycans"/>
</dbReference>
<dbReference type="GO" id="GO:0020002">
    <property type="term" value="C:host cell plasma membrane"/>
    <property type="evidence" value="ECO:0007669"/>
    <property type="project" value="UniProtKB-SubCell"/>
</dbReference>
<dbReference type="GO" id="GO:0016020">
    <property type="term" value="C:membrane"/>
    <property type="evidence" value="ECO:0007669"/>
    <property type="project" value="UniProtKB-UniRule"/>
</dbReference>
<dbReference type="GO" id="GO:0019031">
    <property type="term" value="C:viral envelope"/>
    <property type="evidence" value="ECO:0007669"/>
    <property type="project" value="UniProtKB-UniRule"/>
</dbReference>
<dbReference type="GO" id="GO:0055036">
    <property type="term" value="C:virion membrane"/>
    <property type="evidence" value="ECO:0007669"/>
    <property type="project" value="UniProtKB-SubCell"/>
</dbReference>
<dbReference type="GO" id="GO:0046789">
    <property type="term" value="F:host cell surface receptor binding"/>
    <property type="evidence" value="ECO:0007669"/>
    <property type="project" value="UniProtKB-UniRule"/>
</dbReference>
<dbReference type="GO" id="GO:0075512">
    <property type="term" value="P:clathrin-dependent endocytosis of virus by host cell"/>
    <property type="evidence" value="ECO:0007669"/>
    <property type="project" value="UniProtKB-UniRule"/>
</dbReference>
<dbReference type="GO" id="GO:0039654">
    <property type="term" value="P:fusion of virus membrane with host endosome membrane"/>
    <property type="evidence" value="ECO:0007669"/>
    <property type="project" value="UniProtKB-UniRule"/>
</dbReference>
<dbReference type="GO" id="GO:0019064">
    <property type="term" value="P:fusion of virus membrane with host plasma membrane"/>
    <property type="evidence" value="ECO:0007669"/>
    <property type="project" value="InterPro"/>
</dbReference>
<dbReference type="GO" id="GO:0046761">
    <property type="term" value="P:viral budding from plasma membrane"/>
    <property type="evidence" value="ECO:0007669"/>
    <property type="project" value="UniProtKB-UniRule"/>
</dbReference>
<dbReference type="GO" id="GO:0019062">
    <property type="term" value="P:virion attachment to host cell"/>
    <property type="evidence" value="ECO:0007669"/>
    <property type="project" value="UniProtKB-KW"/>
</dbReference>
<dbReference type="FunFam" id="3.90.20.10:FF:000002">
    <property type="entry name" value="Hemagglutinin"/>
    <property type="match status" value="1"/>
</dbReference>
<dbReference type="Gene3D" id="3.90.20.10">
    <property type="match status" value="1"/>
</dbReference>
<dbReference type="Gene3D" id="3.90.209.20">
    <property type="match status" value="1"/>
</dbReference>
<dbReference type="Gene3D" id="2.10.77.10">
    <property type="entry name" value="Hemagglutinin Chain A, Domain 2"/>
    <property type="match status" value="1"/>
</dbReference>
<dbReference type="HAMAP" id="MF_04072">
    <property type="entry name" value="INFV_HEMA"/>
    <property type="match status" value="1"/>
</dbReference>
<dbReference type="InterPro" id="IPR008980">
    <property type="entry name" value="Capsid_hemagglutn"/>
</dbReference>
<dbReference type="InterPro" id="IPR013828">
    <property type="entry name" value="Hemagglutn_HA1_a/b_dom_sf"/>
</dbReference>
<dbReference type="InterPro" id="IPR000149">
    <property type="entry name" value="Hemagglutn_influenz_A"/>
</dbReference>
<dbReference type="InterPro" id="IPR001364">
    <property type="entry name" value="Hemagglutn_influenz_A/B"/>
</dbReference>
<dbReference type="Pfam" id="PF00509">
    <property type="entry name" value="Hemagglutinin"/>
    <property type="match status" value="1"/>
</dbReference>
<dbReference type="PRINTS" id="PR00330">
    <property type="entry name" value="HEMAGGLUTN1"/>
</dbReference>
<dbReference type="PRINTS" id="PR00329">
    <property type="entry name" value="HEMAGGLUTN12"/>
</dbReference>
<dbReference type="SUPFAM" id="SSF58064">
    <property type="entry name" value="Influenza hemagglutinin (stalk)"/>
    <property type="match status" value="1"/>
</dbReference>
<dbReference type="SUPFAM" id="SSF49818">
    <property type="entry name" value="Viral protein domain"/>
    <property type="match status" value="1"/>
</dbReference>
<proteinExistence type="evidence at transcript level"/>
<sequence>MEAKLFVLFCAFTTLEADTICVGYHANNSTDTVDTILEKNVTVTHSVNLLENSHNGKLCSLNGVAPLQLGKCNVAGWILGNPECDLLLTANSWSYIIETSDSENGTCYPGEFIDYEELREQLSSVSSFERFEIFPKANSWPNHETTKGITAACSYSGTLSFYRNLLWIVKRGNSYPKLSKSYTNNKGKEVLIIWGVHHPPTTSDQQSLYQNADAYVSVGSSKYNRRFTPEIAARPKVKGQAGRMNYYWTLLDQGDTITFEATGNLIAPWYAFALNKGSGSGIITSDTPVHNCDTKCQTPHGALNSSLPFQNVHPITIGECPKYVKSTKLRMATGLRNVPSIQSRGLFGAIAGFIEGGWTGMIDGWYGYHHQNEQGSGYAADQKSTQIAIDGISNKVNSVIEKMNTQFTAVGKEFNDLEKRIENLNKKVDDGFLDVWTYNAELLVLLENERTLDFHDFNVRNLYEKVKSQLRNNAKEIGNGCFEFYHKCDDECMESVKNGTYNYPKYSEESKLNREEIDGVKLESMEVYQILAIYSTVASSLVLLVSLGAISFWMCSNGSLQCRICI</sequence>
<gene>
    <name evidence="2" type="primary">HA</name>
</gene>
<feature type="signal peptide" evidence="2">
    <location>
        <begin position="1"/>
        <end position="17"/>
    </location>
</feature>
<feature type="chain" id="PRO_0000440514" description="Hemagglutinin" evidence="2">
    <location>
        <begin position="18"/>
        <end position="566"/>
    </location>
</feature>
<feature type="chain" id="PRO_5000055180" description="Hemagglutinin HA1 chain" evidence="2">
    <location>
        <begin position="18"/>
        <end position="343"/>
    </location>
</feature>
<feature type="chain" id="PRO_5000055181" description="Hemagglutinin HA2 chain" evidence="2">
    <location>
        <begin position="345"/>
        <end position="566"/>
    </location>
</feature>
<feature type="topological domain" description="Extracellular" evidence="2">
    <location>
        <begin position="18"/>
        <end position="529"/>
    </location>
</feature>
<feature type="transmembrane region" description="Helical" evidence="2">
    <location>
        <begin position="530"/>
        <end position="550"/>
    </location>
</feature>
<feature type="topological domain" description="Cytoplasmic" evidence="2">
    <location>
        <begin position="551"/>
        <end position="566"/>
    </location>
</feature>
<feature type="site" description="Cleavage; by host" evidence="2">
    <location>
        <begin position="344"/>
        <end position="345"/>
    </location>
</feature>
<feature type="lipid moiety-binding region" description="S-palmitoyl cysteine; by host" evidence="2">
    <location>
        <position position="555"/>
    </location>
</feature>
<feature type="lipid moiety-binding region" description="S-palmitoyl cysteine; by host" evidence="2">
    <location>
        <position position="562"/>
    </location>
</feature>
<feature type="lipid moiety-binding region" description="S-palmitoyl cysteine; by host" evidence="2">
    <location>
        <position position="565"/>
    </location>
</feature>
<feature type="glycosylation site" description="N-linked (GlcNAc...) asparagine; by host" evidence="2">
    <location>
        <position position="27"/>
    </location>
</feature>
<feature type="glycosylation site" description="N-linked (GlcNAc...) asparagine; by host" evidence="2">
    <location>
        <position position="28"/>
    </location>
</feature>
<feature type="glycosylation site" description="N-linked (GlcNAc...) asparagine; by host" evidence="2">
    <location>
        <position position="40"/>
    </location>
</feature>
<feature type="glycosylation site" description="N-linked (GlcNAc...) asparagine; by host" evidence="2">
    <location>
        <position position="104"/>
    </location>
</feature>
<feature type="glycosylation site" description="N-linked (GlcNAc...) asparagine; by host" evidence="2">
    <location>
        <position position="304"/>
    </location>
</feature>
<feature type="glycosylation site" description="N-linked (GlcNAc...) asparagine; by host" evidence="2">
    <location>
        <position position="498"/>
    </location>
</feature>
<feature type="disulfide bond" description="Interchain (between HA1 and HA2 chains)" evidence="2">
    <location>
        <begin position="21"/>
        <end position="481"/>
    </location>
</feature>
<feature type="disulfide bond" evidence="2">
    <location>
        <begin position="59"/>
        <end position="292"/>
    </location>
</feature>
<feature type="disulfide bond" evidence="2">
    <location>
        <begin position="72"/>
        <end position="84"/>
    </location>
</feature>
<feature type="disulfide bond" evidence="2">
    <location>
        <begin position="107"/>
        <end position="153"/>
    </location>
</feature>
<feature type="disulfide bond" evidence="2">
    <location>
        <begin position="296"/>
        <end position="320"/>
    </location>
</feature>
<feature type="disulfide bond" evidence="2">
    <location>
        <begin position="488"/>
        <end position="492"/>
    </location>
</feature>
<organismHost>
    <name type="scientific">Aves</name>
    <dbReference type="NCBI Taxonomy" id="8782"/>
</organismHost>
<organismHost>
    <name type="scientific">Homo sapiens</name>
    <name type="common">Human</name>
    <dbReference type="NCBI Taxonomy" id="9606"/>
</organismHost>
<organismHost>
    <name type="scientific">Sus scrofa</name>
    <name type="common">Pig</name>
    <dbReference type="NCBI Taxonomy" id="9823"/>
</organismHost>
<protein>
    <recommendedName>
        <fullName evidence="2">Hemagglutinin</fullName>
    </recommendedName>
    <component>
        <recommendedName>
            <fullName evidence="2">Hemagglutinin HA1 chain</fullName>
        </recommendedName>
    </component>
    <component>
        <recommendedName>
            <fullName evidence="2">Hemagglutinin HA2 chain</fullName>
        </recommendedName>
    </component>
</protein>
<evidence type="ECO:0000250" key="1">
    <source>
        <dbReference type="UniProtKB" id="Q289M7"/>
    </source>
</evidence>
<evidence type="ECO:0000255" key="2">
    <source>
        <dbReference type="HAMAP-Rule" id="MF_04072"/>
    </source>
</evidence>
<evidence type="ECO:0000305" key="3"/>
<reference key="1">
    <citation type="journal article" date="1998" name="J. Virol.">
        <title>Molecular basis for the generation in pigs of influenza A viruses with pandemic potential.</title>
        <authorList>
            <person name="Ito T."/>
            <person name="Couceiro J.N."/>
            <person name="Kelm S."/>
            <person name="Baum L.G."/>
            <person name="Krauss S."/>
            <person name="Castrucci M.R."/>
            <person name="Donatelli I."/>
            <person name="Kida H."/>
            <person name="Paulson J.C."/>
            <person name="Webster R.G."/>
            <person name="Kawaoka Y."/>
        </authorList>
    </citation>
    <scope>NUCLEOTIDE SEQUENCE [MRNA]</scope>
</reference>
<keyword id="KW-1167">Clathrin- and caveolin-independent endocytosis of virus by host</keyword>
<keyword id="KW-1165">Clathrin-mediated endocytosis of virus by host</keyword>
<keyword id="KW-1015">Disulfide bond</keyword>
<keyword id="KW-1170">Fusion of virus membrane with host endosomal membrane</keyword>
<keyword id="KW-1168">Fusion of virus membrane with host membrane</keyword>
<keyword id="KW-0325">Glycoprotein</keyword>
<keyword id="KW-0348">Hemagglutinin</keyword>
<keyword id="KW-1032">Host cell membrane</keyword>
<keyword id="KW-1043">Host membrane</keyword>
<keyword id="KW-0945">Host-virus interaction</keyword>
<keyword id="KW-0449">Lipoprotein</keyword>
<keyword id="KW-0472">Membrane</keyword>
<keyword id="KW-0564">Palmitate</keyword>
<keyword id="KW-0732">Signal</keyword>
<keyword id="KW-0812">Transmembrane</keyword>
<keyword id="KW-1133">Transmembrane helix</keyword>
<keyword id="KW-1161">Viral attachment to host cell</keyword>
<keyword id="KW-0261">Viral envelope protein</keyword>
<keyword id="KW-1162">Viral penetration into host cytoplasm</keyword>
<keyword id="KW-0946">Virion</keyword>
<keyword id="KW-1164">Virus endocytosis by host</keyword>
<keyword id="KW-1160">Virus entry into host cell</keyword>
<organism>
    <name type="scientific">Influenza A virus (strain A/Swine/Netherlands/12/1985 H1N1)</name>
    <dbReference type="NCBI Taxonomy" id="380347"/>
    <lineage>
        <taxon>Viruses</taxon>
        <taxon>Riboviria</taxon>
        <taxon>Orthornavirae</taxon>
        <taxon>Negarnaviricota</taxon>
        <taxon>Polyploviricotina</taxon>
        <taxon>Insthoviricetes</taxon>
        <taxon>Articulavirales</taxon>
        <taxon>Orthomyxoviridae</taxon>
        <taxon>Alphainfluenzavirus</taxon>
        <taxon>Alphainfluenzavirus influenzae</taxon>
        <taxon>Influenza A virus</taxon>
    </lineage>
</organism>
<comment type="function">
    <text evidence="2">Binds to sialic acid-containing receptors on the cell surface, bringing about the attachment of the virus particle to the cell. This attachment induces virion internalization either through clathrin-dependent endocytosis or through clathrin- and caveolin-independent pathway. Plays a major role in the determination of host range restriction and virulence. Class I viral fusion protein. Responsible for penetration of the virus into the cell cytoplasm by mediating the fusion of the membrane of the endocytosed virus particle with the endosomal membrane. Low pH in endosomes induces an irreversible conformational change in HA2, releasing the fusion hydrophobic peptide. Several trimers are required to form a competent fusion pore.</text>
</comment>
<comment type="subunit">
    <text evidence="1">Homotrimer of disulfide-linked HA1-HA2. Interacts with human CACNA1C.</text>
</comment>
<comment type="subcellular location">
    <subcellularLocation>
        <location evidence="2">Virion membrane</location>
        <topology evidence="2">Single-pass type I membrane protein</topology>
    </subcellularLocation>
    <subcellularLocation>
        <location evidence="2">Host apical cell membrane</location>
        <topology evidence="2">Single-pass type I membrane protein</topology>
    </subcellularLocation>
    <text evidence="2">Targeted to the apical plasma membrane in epithelial polarized cells through a signal present in the transmembrane domain. Associated with glycosphingolipid- and cholesterol-enriched detergent-resistant lipid rafts.</text>
</comment>
<comment type="PTM">
    <text evidence="2">Palmitoylated.</text>
</comment>
<comment type="PTM">
    <text evidence="2">In natural infection, inactive HA is matured into HA1 and HA2 outside the cell by one or more trypsin-like, arginine-specific endoprotease secreted by the bronchial epithelial cells. One identified protease that may be involved in this process is secreted in lungs by club cells.</text>
</comment>
<comment type="miscellaneous">
    <text>Major glycoprotein, comprises over 80% of the envelope proteins present in virus particle.</text>
</comment>
<comment type="miscellaneous">
    <text>The extent of infection into host organism is determined by HA. Influenza viruses bud from the apical surface of polarized epithelial cells (e.g. bronchial epithelial cells) into lumen of lungs and are therefore usually pneumotropic. The reason is that HA is cleaved by tryptase clara which is restricted to lungs. However, HAs of H5 and H7 pantropic avian viruses subtypes can be cleaved by furin and subtilisin-type enzymes, allowing the virus to grow in other organs than lungs.</text>
</comment>
<comment type="miscellaneous">
    <text evidence="3">The influenza A genome consist of 8 RNA segments. Genetic variation of hemagglutinin and/or neuraminidase genes results in the emergence of new influenza strains. The mechanism of variation can be the result of point mutations or the result of genetic reassortment between segments of two different strains.</text>
</comment>
<comment type="similarity">
    <text evidence="2">Belongs to the influenza viruses hemagglutinin family.</text>
</comment>
<name>HEMA_I85A4</name>